<gene>
    <name evidence="1" type="primary">rpsD</name>
    <name type="ordered locus">Gbem_0959</name>
</gene>
<keyword id="KW-1185">Reference proteome</keyword>
<keyword id="KW-0687">Ribonucleoprotein</keyword>
<keyword id="KW-0689">Ribosomal protein</keyword>
<keyword id="KW-0694">RNA-binding</keyword>
<keyword id="KW-0699">rRNA-binding</keyword>
<sequence length="208" mass="23947">MARYTGPSCRLCRREGSELFLKGERCYTDKCAIKRRSYPPGQHGQGRIKVSDYGVQLREKQKVRRIYGILENQFRGYFETADRMKGVTGENLLFILERRLDNVAYRLGFATSRDEARQLVRHGHFTLNGKKVNIPSLQVKAGDVLQLREKSRKVAAISESLEGVVRRGIPQWLELEKDAFKGTVKAMPVREDITMPIQEQLIVELYSK</sequence>
<feature type="chain" id="PRO_1000140738" description="Small ribosomal subunit protein uS4">
    <location>
        <begin position="1"/>
        <end position="208"/>
    </location>
</feature>
<feature type="domain" description="S4 RNA-binding" evidence="1">
    <location>
        <begin position="98"/>
        <end position="159"/>
    </location>
</feature>
<dbReference type="EMBL" id="CP001124">
    <property type="protein sequence ID" value="ACH37980.1"/>
    <property type="molecule type" value="Genomic_DNA"/>
</dbReference>
<dbReference type="RefSeq" id="WP_012529392.1">
    <property type="nucleotide sequence ID" value="NC_011146.1"/>
</dbReference>
<dbReference type="SMR" id="B5EFS6"/>
<dbReference type="STRING" id="404380.Gbem_0959"/>
<dbReference type="KEGG" id="gbm:Gbem_0959"/>
<dbReference type="eggNOG" id="COG0522">
    <property type="taxonomic scope" value="Bacteria"/>
</dbReference>
<dbReference type="HOGENOM" id="CLU_092403_0_2_7"/>
<dbReference type="OrthoDB" id="9803672at2"/>
<dbReference type="Proteomes" id="UP000008825">
    <property type="component" value="Chromosome"/>
</dbReference>
<dbReference type="GO" id="GO:0015935">
    <property type="term" value="C:small ribosomal subunit"/>
    <property type="evidence" value="ECO:0007669"/>
    <property type="project" value="InterPro"/>
</dbReference>
<dbReference type="GO" id="GO:0019843">
    <property type="term" value="F:rRNA binding"/>
    <property type="evidence" value="ECO:0007669"/>
    <property type="project" value="UniProtKB-UniRule"/>
</dbReference>
<dbReference type="GO" id="GO:0003735">
    <property type="term" value="F:structural constituent of ribosome"/>
    <property type="evidence" value="ECO:0007669"/>
    <property type="project" value="InterPro"/>
</dbReference>
<dbReference type="GO" id="GO:0042274">
    <property type="term" value="P:ribosomal small subunit biogenesis"/>
    <property type="evidence" value="ECO:0007669"/>
    <property type="project" value="TreeGrafter"/>
</dbReference>
<dbReference type="GO" id="GO:0006412">
    <property type="term" value="P:translation"/>
    <property type="evidence" value="ECO:0007669"/>
    <property type="project" value="UniProtKB-UniRule"/>
</dbReference>
<dbReference type="CDD" id="cd00165">
    <property type="entry name" value="S4"/>
    <property type="match status" value="1"/>
</dbReference>
<dbReference type="FunFam" id="1.10.1050.10:FF:000001">
    <property type="entry name" value="30S ribosomal protein S4"/>
    <property type="match status" value="1"/>
</dbReference>
<dbReference type="FunFam" id="3.10.290.10:FF:000001">
    <property type="entry name" value="30S ribosomal protein S4"/>
    <property type="match status" value="1"/>
</dbReference>
<dbReference type="Gene3D" id="1.10.1050.10">
    <property type="entry name" value="Ribosomal Protein S4 Delta 41, Chain A, domain 1"/>
    <property type="match status" value="1"/>
</dbReference>
<dbReference type="Gene3D" id="3.10.290.10">
    <property type="entry name" value="RNA-binding S4 domain"/>
    <property type="match status" value="1"/>
</dbReference>
<dbReference type="HAMAP" id="MF_01306_B">
    <property type="entry name" value="Ribosomal_uS4_B"/>
    <property type="match status" value="1"/>
</dbReference>
<dbReference type="InterPro" id="IPR022801">
    <property type="entry name" value="Ribosomal_uS4"/>
</dbReference>
<dbReference type="InterPro" id="IPR005709">
    <property type="entry name" value="Ribosomal_uS4_bac-type"/>
</dbReference>
<dbReference type="InterPro" id="IPR001912">
    <property type="entry name" value="Ribosomal_uS4_N"/>
</dbReference>
<dbReference type="InterPro" id="IPR002942">
    <property type="entry name" value="S4_RNA-bd"/>
</dbReference>
<dbReference type="InterPro" id="IPR036986">
    <property type="entry name" value="S4_RNA-bd_sf"/>
</dbReference>
<dbReference type="NCBIfam" id="NF003717">
    <property type="entry name" value="PRK05327.1"/>
    <property type="match status" value="1"/>
</dbReference>
<dbReference type="NCBIfam" id="TIGR01017">
    <property type="entry name" value="rpsD_bact"/>
    <property type="match status" value="1"/>
</dbReference>
<dbReference type="PANTHER" id="PTHR11831">
    <property type="entry name" value="30S 40S RIBOSOMAL PROTEIN"/>
    <property type="match status" value="1"/>
</dbReference>
<dbReference type="PANTHER" id="PTHR11831:SF4">
    <property type="entry name" value="SMALL RIBOSOMAL SUBUNIT PROTEIN US4M"/>
    <property type="match status" value="1"/>
</dbReference>
<dbReference type="Pfam" id="PF00163">
    <property type="entry name" value="Ribosomal_S4"/>
    <property type="match status" value="1"/>
</dbReference>
<dbReference type="Pfam" id="PF01479">
    <property type="entry name" value="S4"/>
    <property type="match status" value="1"/>
</dbReference>
<dbReference type="SMART" id="SM01390">
    <property type="entry name" value="Ribosomal_S4"/>
    <property type="match status" value="1"/>
</dbReference>
<dbReference type="SMART" id="SM00363">
    <property type="entry name" value="S4"/>
    <property type="match status" value="1"/>
</dbReference>
<dbReference type="SUPFAM" id="SSF55174">
    <property type="entry name" value="Alpha-L RNA-binding motif"/>
    <property type="match status" value="1"/>
</dbReference>
<dbReference type="PROSITE" id="PS50889">
    <property type="entry name" value="S4"/>
    <property type="match status" value="1"/>
</dbReference>
<organism>
    <name type="scientific">Citrifermentans bemidjiense (strain ATCC BAA-1014 / DSM 16622 / JCM 12645 / Bem)</name>
    <name type="common">Geobacter bemidjiensis</name>
    <dbReference type="NCBI Taxonomy" id="404380"/>
    <lineage>
        <taxon>Bacteria</taxon>
        <taxon>Pseudomonadati</taxon>
        <taxon>Thermodesulfobacteriota</taxon>
        <taxon>Desulfuromonadia</taxon>
        <taxon>Geobacterales</taxon>
        <taxon>Geobacteraceae</taxon>
        <taxon>Citrifermentans</taxon>
    </lineage>
</organism>
<comment type="function">
    <text evidence="1">One of the primary rRNA binding proteins, it binds directly to 16S rRNA where it nucleates assembly of the body of the 30S subunit.</text>
</comment>
<comment type="function">
    <text evidence="1">With S5 and S12 plays an important role in translational accuracy.</text>
</comment>
<comment type="subunit">
    <text evidence="1">Part of the 30S ribosomal subunit. Contacts protein S5. The interaction surface between S4 and S5 is involved in control of translational fidelity.</text>
</comment>
<comment type="similarity">
    <text evidence="1">Belongs to the universal ribosomal protein uS4 family.</text>
</comment>
<reference key="1">
    <citation type="submission" date="2008-07" db="EMBL/GenBank/DDBJ databases">
        <title>Complete sequence of Geobacter bemidjiensis BEM.</title>
        <authorList>
            <consortium name="US DOE Joint Genome Institute"/>
            <person name="Lucas S."/>
            <person name="Copeland A."/>
            <person name="Lapidus A."/>
            <person name="Glavina del Rio T."/>
            <person name="Dalin E."/>
            <person name="Tice H."/>
            <person name="Bruce D."/>
            <person name="Goodwin L."/>
            <person name="Pitluck S."/>
            <person name="Kiss H."/>
            <person name="Brettin T."/>
            <person name="Detter J.C."/>
            <person name="Han C."/>
            <person name="Kuske C.R."/>
            <person name="Schmutz J."/>
            <person name="Larimer F."/>
            <person name="Land M."/>
            <person name="Hauser L."/>
            <person name="Kyrpides N."/>
            <person name="Lykidis A."/>
            <person name="Lovley D."/>
            <person name="Richardson P."/>
        </authorList>
    </citation>
    <scope>NUCLEOTIDE SEQUENCE [LARGE SCALE GENOMIC DNA]</scope>
    <source>
        <strain>ATCC BAA-1014 / DSM 16622 / JCM 12645 / Bem</strain>
    </source>
</reference>
<evidence type="ECO:0000255" key="1">
    <source>
        <dbReference type="HAMAP-Rule" id="MF_01306"/>
    </source>
</evidence>
<evidence type="ECO:0000305" key="2"/>
<protein>
    <recommendedName>
        <fullName evidence="1">Small ribosomal subunit protein uS4</fullName>
    </recommendedName>
    <alternativeName>
        <fullName evidence="2">30S ribosomal protein S4</fullName>
    </alternativeName>
</protein>
<proteinExistence type="inferred from homology"/>
<accession>B5EFS6</accession>
<name>RS4_CITBB</name>